<gene>
    <name evidence="1" type="primary">metE</name>
    <name type="ordered locus">Acry_2208</name>
</gene>
<organism>
    <name type="scientific">Acidiphilium cryptum (strain JF-5)</name>
    <dbReference type="NCBI Taxonomy" id="349163"/>
    <lineage>
        <taxon>Bacteria</taxon>
        <taxon>Pseudomonadati</taxon>
        <taxon>Pseudomonadota</taxon>
        <taxon>Alphaproteobacteria</taxon>
        <taxon>Acetobacterales</taxon>
        <taxon>Acidocellaceae</taxon>
        <taxon>Acidiphilium</taxon>
    </lineage>
</organism>
<accession>A5G0M4</accession>
<protein>
    <recommendedName>
        <fullName evidence="1">5-methyltetrahydropteroyltriglutamate--homocysteine methyltransferase</fullName>
        <ecNumber evidence="1">2.1.1.14</ecNumber>
    </recommendedName>
    <alternativeName>
        <fullName evidence="1">Cobalamin-independent methionine synthase</fullName>
    </alternativeName>
    <alternativeName>
        <fullName evidence="1">Methionine synthase, vitamin-B12 independent isozyme</fullName>
    </alternativeName>
</protein>
<reference key="1">
    <citation type="submission" date="2007-05" db="EMBL/GenBank/DDBJ databases">
        <title>Complete sequence of chromosome of Acidiphilium cryptum JF-5.</title>
        <authorList>
            <consortium name="US DOE Joint Genome Institute"/>
            <person name="Copeland A."/>
            <person name="Lucas S."/>
            <person name="Lapidus A."/>
            <person name="Barry K."/>
            <person name="Detter J.C."/>
            <person name="Glavina del Rio T."/>
            <person name="Hammon N."/>
            <person name="Israni S."/>
            <person name="Dalin E."/>
            <person name="Tice H."/>
            <person name="Pitluck S."/>
            <person name="Sims D."/>
            <person name="Brettin T."/>
            <person name="Bruce D."/>
            <person name="Han C."/>
            <person name="Schmutz J."/>
            <person name="Larimer F."/>
            <person name="Land M."/>
            <person name="Hauser L."/>
            <person name="Kyrpides N."/>
            <person name="Kim E."/>
            <person name="Magnuson T."/>
            <person name="Richardson P."/>
        </authorList>
    </citation>
    <scope>NUCLEOTIDE SEQUENCE [LARGE SCALE GENOMIC DNA]</scope>
    <source>
        <strain>JF-5</strain>
    </source>
</reference>
<proteinExistence type="inferred from homology"/>
<sequence>MSIATSLGFPRIGRRRELKSALEAHWAGELSEAGLQEAARLLRAESHSLQQGLGIGHIPSNDFALYDHVLDTACMVGAIPPGYGWRGGEVTLPTYFALARGTGGGDAAAGLPALEMTKWFDTNYHYLVPRLAAGQHFAVTANRPLALFREALARHRRTRPVLLGPVSFLLLAKTDDGSDPLDLLDRLLPCYAQVLAELAAEGCAWVQMDEPVLALDLAPKARAALRHAYETLARGATPRLLLASYFAPIADNLPTALALPVAGLHLDLVRGRDDLAPVLAAIGPATWLSLGLVDGRNVWRADLRAALATAREAARALGGSERLMIAPSCSLLHVPVDLAQEDRLDPAIRPWLAFATQKLAEVATIARGLDEGEGAIAEALEASDAALRTRRDSARVHRTDVAARLLGATPEMERRPAPHAARRARQRQRLPLPAFPTTTIGSLPQTSGVRRTRAALARGEIGAAEYDEAIATWTEDAIRLQERIGLDVLVHGEFERNDMVKYFGEQLDGFAFTRHGWVQSYGSRCVAPPIIWGDVARPRPMTVRWARHAQSLTARPVKGMLTGPVTMLQWSFVRDDLPRETVCRQIALALRDEVADLEAAGLAIIQVDEPAFREGLPLRTADREAYLRWAVSCFRLATAVVRDDTAIHTHMCYAEFQDIMPAIATMDADAISIETARSRMELLEAFAGHGPSAYPAEIGPGVWDIHSPRIPPEEEILALLRLARRKLADDQLWVNPDCGLKTRNWREVIPALENLVGAARRLRAEAIPA</sequence>
<evidence type="ECO:0000255" key="1">
    <source>
        <dbReference type="HAMAP-Rule" id="MF_00172"/>
    </source>
</evidence>
<feature type="chain" id="PRO_1000017214" description="5-methyltetrahydropteroyltriglutamate--homocysteine methyltransferase">
    <location>
        <begin position="1"/>
        <end position="769"/>
    </location>
</feature>
<feature type="active site" description="Proton donor" evidence="1">
    <location>
        <position position="706"/>
    </location>
</feature>
<feature type="binding site" evidence="1">
    <location>
        <begin position="16"/>
        <end position="19"/>
    </location>
    <ligand>
        <name>5-methyltetrahydropteroyltri-L-glutamate</name>
        <dbReference type="ChEBI" id="CHEBI:58207"/>
    </ligand>
</feature>
<feature type="binding site" evidence="1">
    <location>
        <position position="118"/>
    </location>
    <ligand>
        <name>5-methyltetrahydropteroyltri-L-glutamate</name>
        <dbReference type="ChEBI" id="CHEBI:58207"/>
    </ligand>
</feature>
<feature type="binding site" evidence="1">
    <location>
        <begin position="440"/>
        <end position="442"/>
    </location>
    <ligand>
        <name>L-homocysteine</name>
        <dbReference type="ChEBI" id="CHEBI:58199"/>
    </ligand>
</feature>
<feature type="binding site" evidence="1">
    <location>
        <begin position="440"/>
        <end position="442"/>
    </location>
    <ligand>
        <name>L-methionine</name>
        <dbReference type="ChEBI" id="CHEBI:57844"/>
    </ligand>
</feature>
<feature type="binding site" evidence="1">
    <location>
        <position position="493"/>
    </location>
    <ligand>
        <name>L-homocysteine</name>
        <dbReference type="ChEBI" id="CHEBI:58199"/>
    </ligand>
</feature>
<feature type="binding site" evidence="1">
    <location>
        <position position="493"/>
    </location>
    <ligand>
        <name>L-methionine</name>
        <dbReference type="ChEBI" id="CHEBI:57844"/>
    </ligand>
</feature>
<feature type="binding site" evidence="1">
    <location>
        <begin position="524"/>
        <end position="525"/>
    </location>
    <ligand>
        <name>5-methyltetrahydropteroyltri-L-glutamate</name>
        <dbReference type="ChEBI" id="CHEBI:58207"/>
    </ligand>
</feature>
<feature type="binding site" evidence="1">
    <location>
        <position position="570"/>
    </location>
    <ligand>
        <name>5-methyltetrahydropteroyltri-L-glutamate</name>
        <dbReference type="ChEBI" id="CHEBI:58207"/>
    </ligand>
</feature>
<feature type="binding site" evidence="1">
    <location>
        <position position="608"/>
    </location>
    <ligand>
        <name>L-homocysteine</name>
        <dbReference type="ChEBI" id="CHEBI:58199"/>
    </ligand>
</feature>
<feature type="binding site" evidence="1">
    <location>
        <position position="608"/>
    </location>
    <ligand>
        <name>L-methionine</name>
        <dbReference type="ChEBI" id="CHEBI:57844"/>
    </ligand>
</feature>
<feature type="binding site" evidence="1">
    <location>
        <position position="614"/>
    </location>
    <ligand>
        <name>5-methyltetrahydropteroyltri-L-glutamate</name>
        <dbReference type="ChEBI" id="CHEBI:58207"/>
    </ligand>
</feature>
<feature type="binding site" evidence="1">
    <location>
        <position position="650"/>
    </location>
    <ligand>
        <name>Zn(2+)</name>
        <dbReference type="ChEBI" id="CHEBI:29105"/>
        <note>catalytic</note>
    </ligand>
</feature>
<feature type="binding site" evidence="1">
    <location>
        <position position="652"/>
    </location>
    <ligand>
        <name>Zn(2+)</name>
        <dbReference type="ChEBI" id="CHEBI:29105"/>
        <note>catalytic</note>
    </ligand>
</feature>
<feature type="binding site" evidence="1">
    <location>
        <position position="674"/>
    </location>
    <ligand>
        <name>Zn(2+)</name>
        <dbReference type="ChEBI" id="CHEBI:29105"/>
        <note>catalytic</note>
    </ligand>
</feature>
<feature type="binding site" evidence="1">
    <location>
        <position position="738"/>
    </location>
    <ligand>
        <name>Zn(2+)</name>
        <dbReference type="ChEBI" id="CHEBI:29105"/>
        <note>catalytic</note>
    </ligand>
</feature>
<keyword id="KW-0028">Amino-acid biosynthesis</keyword>
<keyword id="KW-0479">Metal-binding</keyword>
<keyword id="KW-0486">Methionine biosynthesis</keyword>
<keyword id="KW-0489">Methyltransferase</keyword>
<keyword id="KW-1185">Reference proteome</keyword>
<keyword id="KW-0677">Repeat</keyword>
<keyword id="KW-0808">Transferase</keyword>
<keyword id="KW-0862">Zinc</keyword>
<dbReference type="EC" id="2.1.1.14" evidence="1"/>
<dbReference type="EMBL" id="CP000697">
    <property type="protein sequence ID" value="ABQ31406.1"/>
    <property type="molecule type" value="Genomic_DNA"/>
</dbReference>
<dbReference type="RefSeq" id="WP_012039878.1">
    <property type="nucleotide sequence ID" value="NC_009484.1"/>
</dbReference>
<dbReference type="SMR" id="A5G0M4"/>
<dbReference type="STRING" id="349163.Acry_2208"/>
<dbReference type="KEGG" id="acr:Acry_2208"/>
<dbReference type="eggNOG" id="COG0620">
    <property type="taxonomic scope" value="Bacteria"/>
</dbReference>
<dbReference type="HOGENOM" id="CLU_013175_0_0_5"/>
<dbReference type="UniPathway" id="UPA00051">
    <property type="reaction ID" value="UER00082"/>
</dbReference>
<dbReference type="Proteomes" id="UP000000245">
    <property type="component" value="Chromosome"/>
</dbReference>
<dbReference type="GO" id="GO:0003871">
    <property type="term" value="F:5-methyltetrahydropteroyltriglutamate-homocysteine S-methyltransferase activity"/>
    <property type="evidence" value="ECO:0007669"/>
    <property type="project" value="UniProtKB-UniRule"/>
</dbReference>
<dbReference type="GO" id="GO:0008270">
    <property type="term" value="F:zinc ion binding"/>
    <property type="evidence" value="ECO:0007669"/>
    <property type="project" value="InterPro"/>
</dbReference>
<dbReference type="GO" id="GO:0009086">
    <property type="term" value="P:methionine biosynthetic process"/>
    <property type="evidence" value="ECO:0007669"/>
    <property type="project" value="UniProtKB-UniRule"/>
</dbReference>
<dbReference type="GO" id="GO:0032259">
    <property type="term" value="P:methylation"/>
    <property type="evidence" value="ECO:0007669"/>
    <property type="project" value="UniProtKB-KW"/>
</dbReference>
<dbReference type="CDD" id="cd03311">
    <property type="entry name" value="CIMS_C_terminal_like"/>
    <property type="match status" value="1"/>
</dbReference>
<dbReference type="CDD" id="cd03312">
    <property type="entry name" value="CIMS_N_terminal_like"/>
    <property type="match status" value="1"/>
</dbReference>
<dbReference type="Gene3D" id="3.20.20.210">
    <property type="match status" value="2"/>
</dbReference>
<dbReference type="HAMAP" id="MF_00172">
    <property type="entry name" value="Meth_synth"/>
    <property type="match status" value="1"/>
</dbReference>
<dbReference type="InterPro" id="IPR013215">
    <property type="entry name" value="Cbl-indep_Met_Synth_N"/>
</dbReference>
<dbReference type="InterPro" id="IPR006276">
    <property type="entry name" value="Cobalamin-indep_Met_synthase"/>
</dbReference>
<dbReference type="InterPro" id="IPR002629">
    <property type="entry name" value="Met_Synth_C/arc"/>
</dbReference>
<dbReference type="InterPro" id="IPR038071">
    <property type="entry name" value="UROD/MetE-like_sf"/>
</dbReference>
<dbReference type="NCBIfam" id="TIGR01371">
    <property type="entry name" value="met_syn_B12ind"/>
    <property type="match status" value="1"/>
</dbReference>
<dbReference type="NCBIfam" id="NF003556">
    <property type="entry name" value="PRK05222.1"/>
    <property type="match status" value="1"/>
</dbReference>
<dbReference type="PANTHER" id="PTHR30519">
    <property type="entry name" value="5-METHYLTETRAHYDROPTEROYLTRIGLUTAMATE--HOMOCYSTEINE METHYLTRANSFERASE"/>
    <property type="match status" value="1"/>
</dbReference>
<dbReference type="Pfam" id="PF08267">
    <property type="entry name" value="Meth_synt_1"/>
    <property type="match status" value="1"/>
</dbReference>
<dbReference type="Pfam" id="PF01717">
    <property type="entry name" value="Meth_synt_2"/>
    <property type="match status" value="1"/>
</dbReference>
<dbReference type="PIRSF" id="PIRSF000382">
    <property type="entry name" value="MeTrfase_B12_ind"/>
    <property type="match status" value="1"/>
</dbReference>
<dbReference type="SUPFAM" id="SSF51726">
    <property type="entry name" value="UROD/MetE-like"/>
    <property type="match status" value="2"/>
</dbReference>
<comment type="function">
    <text evidence="1">Catalyzes the transfer of a methyl group from 5-methyltetrahydrofolate to homocysteine resulting in methionine formation.</text>
</comment>
<comment type="catalytic activity">
    <reaction evidence="1">
        <text>5-methyltetrahydropteroyltri-L-glutamate + L-homocysteine = tetrahydropteroyltri-L-glutamate + L-methionine</text>
        <dbReference type="Rhea" id="RHEA:21196"/>
        <dbReference type="ChEBI" id="CHEBI:57844"/>
        <dbReference type="ChEBI" id="CHEBI:58140"/>
        <dbReference type="ChEBI" id="CHEBI:58199"/>
        <dbReference type="ChEBI" id="CHEBI:58207"/>
        <dbReference type="EC" id="2.1.1.14"/>
    </reaction>
</comment>
<comment type="cofactor">
    <cofactor evidence="1">
        <name>Zn(2+)</name>
        <dbReference type="ChEBI" id="CHEBI:29105"/>
    </cofactor>
    <text evidence="1">Binds 1 zinc ion per subunit.</text>
</comment>
<comment type="pathway">
    <text evidence="1">Amino-acid biosynthesis; L-methionine biosynthesis via de novo pathway; L-methionine from L-homocysteine (MetE route): step 1/1.</text>
</comment>
<comment type="similarity">
    <text evidence="1">Belongs to the vitamin-B12 independent methionine synthase family.</text>
</comment>
<name>METE_ACICJ</name>